<name>MSRB_VIBVU</name>
<reference key="1">
    <citation type="submission" date="2002-12" db="EMBL/GenBank/DDBJ databases">
        <title>Complete genome sequence of Vibrio vulnificus CMCP6.</title>
        <authorList>
            <person name="Rhee J.H."/>
            <person name="Kim S.Y."/>
            <person name="Chung S.S."/>
            <person name="Kim J.J."/>
            <person name="Moon Y.H."/>
            <person name="Jeong H."/>
            <person name="Choy H.E."/>
        </authorList>
    </citation>
    <scope>NUCLEOTIDE SEQUENCE [LARGE SCALE GENOMIC DNA]</scope>
    <source>
        <strain>CMCP6</strain>
    </source>
</reference>
<proteinExistence type="inferred from homology"/>
<comment type="catalytic activity">
    <reaction evidence="1">
        <text>L-methionyl-[protein] + [thioredoxin]-disulfide + H2O = L-methionyl-(R)-S-oxide-[protein] + [thioredoxin]-dithiol</text>
        <dbReference type="Rhea" id="RHEA:24164"/>
        <dbReference type="Rhea" id="RHEA-COMP:10698"/>
        <dbReference type="Rhea" id="RHEA-COMP:10700"/>
        <dbReference type="Rhea" id="RHEA-COMP:12313"/>
        <dbReference type="Rhea" id="RHEA-COMP:12314"/>
        <dbReference type="ChEBI" id="CHEBI:15377"/>
        <dbReference type="ChEBI" id="CHEBI:16044"/>
        <dbReference type="ChEBI" id="CHEBI:29950"/>
        <dbReference type="ChEBI" id="CHEBI:45764"/>
        <dbReference type="ChEBI" id="CHEBI:50058"/>
        <dbReference type="EC" id="1.8.4.12"/>
    </reaction>
</comment>
<comment type="cofactor">
    <cofactor evidence="1">
        <name>Zn(2+)</name>
        <dbReference type="ChEBI" id="CHEBI:29105"/>
    </cofactor>
    <text evidence="1">Binds 1 zinc ion per subunit. The zinc ion is important for the structural integrity of the protein.</text>
</comment>
<comment type="similarity">
    <text evidence="1">Belongs to the MsrB Met sulfoxide reductase family.</text>
</comment>
<organism>
    <name type="scientific">Vibrio vulnificus (strain CMCP6)</name>
    <dbReference type="NCBI Taxonomy" id="216895"/>
    <lineage>
        <taxon>Bacteria</taxon>
        <taxon>Pseudomonadati</taxon>
        <taxon>Pseudomonadota</taxon>
        <taxon>Gammaproteobacteria</taxon>
        <taxon>Vibrionales</taxon>
        <taxon>Vibrionaceae</taxon>
        <taxon>Vibrio</taxon>
    </lineage>
</organism>
<protein>
    <recommendedName>
        <fullName evidence="1">Peptide methionine sulfoxide reductase MsrB</fullName>
        <ecNumber evidence="1">1.8.4.12</ecNumber>
    </recommendedName>
    <alternativeName>
        <fullName evidence="1">Peptide-methionine (R)-S-oxide reductase</fullName>
    </alternativeName>
</protein>
<feature type="chain" id="PRO_0000140314" description="Peptide methionine sulfoxide reductase MsrB">
    <location>
        <begin position="1"/>
        <end position="154"/>
    </location>
</feature>
<feature type="domain" description="MsrB" evidence="2">
    <location>
        <begin position="28"/>
        <end position="150"/>
    </location>
</feature>
<feature type="active site" description="Nucleophile" evidence="2">
    <location>
        <position position="139"/>
    </location>
</feature>
<feature type="binding site" evidence="2">
    <location>
        <position position="67"/>
    </location>
    <ligand>
        <name>Zn(2+)</name>
        <dbReference type="ChEBI" id="CHEBI:29105"/>
    </ligand>
</feature>
<feature type="binding site" evidence="2">
    <location>
        <position position="70"/>
    </location>
    <ligand>
        <name>Zn(2+)</name>
        <dbReference type="ChEBI" id="CHEBI:29105"/>
    </ligand>
</feature>
<feature type="binding site" evidence="2">
    <location>
        <position position="116"/>
    </location>
    <ligand>
        <name>Zn(2+)</name>
        <dbReference type="ChEBI" id="CHEBI:29105"/>
    </ligand>
</feature>
<feature type="binding site" evidence="2">
    <location>
        <position position="119"/>
    </location>
    <ligand>
        <name>Zn(2+)</name>
        <dbReference type="ChEBI" id="CHEBI:29105"/>
    </ligand>
</feature>
<dbReference type="EC" id="1.8.4.12" evidence="1"/>
<dbReference type="EMBL" id="AE016795">
    <property type="protein sequence ID" value="AAO11459.2"/>
    <property type="molecule type" value="Genomic_DNA"/>
</dbReference>
<dbReference type="SMR" id="Q8D849"/>
<dbReference type="KEGG" id="vvu:VV1_3139"/>
<dbReference type="HOGENOM" id="CLU_031040_8_5_6"/>
<dbReference type="Proteomes" id="UP000002275">
    <property type="component" value="Chromosome 1"/>
</dbReference>
<dbReference type="GO" id="GO:0005737">
    <property type="term" value="C:cytoplasm"/>
    <property type="evidence" value="ECO:0007669"/>
    <property type="project" value="TreeGrafter"/>
</dbReference>
<dbReference type="GO" id="GO:0033743">
    <property type="term" value="F:peptide-methionine (R)-S-oxide reductase activity"/>
    <property type="evidence" value="ECO:0007669"/>
    <property type="project" value="UniProtKB-UniRule"/>
</dbReference>
<dbReference type="GO" id="GO:0008270">
    <property type="term" value="F:zinc ion binding"/>
    <property type="evidence" value="ECO:0007669"/>
    <property type="project" value="UniProtKB-UniRule"/>
</dbReference>
<dbReference type="GO" id="GO:0030091">
    <property type="term" value="P:protein repair"/>
    <property type="evidence" value="ECO:0007669"/>
    <property type="project" value="InterPro"/>
</dbReference>
<dbReference type="GO" id="GO:0006979">
    <property type="term" value="P:response to oxidative stress"/>
    <property type="evidence" value="ECO:0007669"/>
    <property type="project" value="InterPro"/>
</dbReference>
<dbReference type="FunFam" id="2.170.150.20:FF:000001">
    <property type="entry name" value="Peptide methionine sulfoxide reductase MsrB"/>
    <property type="match status" value="1"/>
</dbReference>
<dbReference type="Gene3D" id="2.170.150.20">
    <property type="entry name" value="Peptide methionine sulfoxide reductase"/>
    <property type="match status" value="1"/>
</dbReference>
<dbReference type="HAMAP" id="MF_01400">
    <property type="entry name" value="MsrB"/>
    <property type="match status" value="1"/>
</dbReference>
<dbReference type="InterPro" id="IPR028427">
    <property type="entry name" value="Met_Sox_Rdtase_MsrB"/>
</dbReference>
<dbReference type="InterPro" id="IPR002579">
    <property type="entry name" value="Met_Sox_Rdtase_MsrB_dom"/>
</dbReference>
<dbReference type="InterPro" id="IPR011057">
    <property type="entry name" value="Mss4-like_sf"/>
</dbReference>
<dbReference type="NCBIfam" id="TIGR00357">
    <property type="entry name" value="peptide-methionine (R)-S-oxide reductase MsrB"/>
    <property type="match status" value="1"/>
</dbReference>
<dbReference type="PANTHER" id="PTHR10173">
    <property type="entry name" value="METHIONINE SULFOXIDE REDUCTASE"/>
    <property type="match status" value="1"/>
</dbReference>
<dbReference type="PANTHER" id="PTHR10173:SF52">
    <property type="entry name" value="METHIONINE-R-SULFOXIDE REDUCTASE B1"/>
    <property type="match status" value="1"/>
</dbReference>
<dbReference type="Pfam" id="PF01641">
    <property type="entry name" value="SelR"/>
    <property type="match status" value="1"/>
</dbReference>
<dbReference type="SUPFAM" id="SSF51316">
    <property type="entry name" value="Mss4-like"/>
    <property type="match status" value="1"/>
</dbReference>
<dbReference type="PROSITE" id="PS51790">
    <property type="entry name" value="MSRB"/>
    <property type="match status" value="1"/>
</dbReference>
<gene>
    <name evidence="1" type="primary">msrB</name>
    <name type="ordered locus">VV1_3139</name>
</gene>
<keyword id="KW-0479">Metal-binding</keyword>
<keyword id="KW-0560">Oxidoreductase</keyword>
<keyword id="KW-0862">Zinc</keyword>
<evidence type="ECO:0000255" key="1">
    <source>
        <dbReference type="HAMAP-Rule" id="MF_01400"/>
    </source>
</evidence>
<evidence type="ECO:0000255" key="2">
    <source>
        <dbReference type="PROSITE-ProRule" id="PRU01126"/>
    </source>
</evidence>
<sequence>MHKKSSTLIRKREISDVTKESKVVLKSDQQWREQLSEQEYHVCREQGTEPPFSGKLLHNKDSGEYACTCCHAPLFSSVNKYDSGCGWPSFDAPINETAVLYLDDFSHGMKRVEIRCARCDSHLGHVFPDGPKTTGERFCVNSVSLIFNKIETNE</sequence>
<accession>Q8D849</accession>